<reference key="1">
    <citation type="journal article" date="2009" name="BMC Microbiol.">
        <title>The genome sequence of Geobacter metallireducens: features of metabolism, physiology and regulation common and dissimilar to Geobacter sulfurreducens.</title>
        <authorList>
            <person name="Aklujkar M."/>
            <person name="Krushkal J."/>
            <person name="DiBartolo G."/>
            <person name="Lapidus A."/>
            <person name="Land M.L."/>
            <person name="Lovley D.R."/>
        </authorList>
    </citation>
    <scope>NUCLEOTIDE SEQUENCE [LARGE SCALE GENOMIC DNA]</scope>
    <source>
        <strain>ATCC 53774 / DSM 7210 / GS-15</strain>
    </source>
</reference>
<organism>
    <name type="scientific">Geobacter metallireducens (strain ATCC 53774 / DSM 7210 / GS-15)</name>
    <dbReference type="NCBI Taxonomy" id="269799"/>
    <lineage>
        <taxon>Bacteria</taxon>
        <taxon>Pseudomonadati</taxon>
        <taxon>Thermodesulfobacteriota</taxon>
        <taxon>Desulfuromonadia</taxon>
        <taxon>Geobacterales</taxon>
        <taxon>Geobacteraceae</taxon>
        <taxon>Geobacter</taxon>
    </lineage>
</organism>
<dbReference type="EMBL" id="CP000148">
    <property type="protein sequence ID" value="ABB30876.1"/>
    <property type="molecule type" value="Genomic_DNA"/>
</dbReference>
<dbReference type="RefSeq" id="WP_004514244.1">
    <property type="nucleotide sequence ID" value="NC_007517.1"/>
</dbReference>
<dbReference type="SMR" id="Q39XZ8"/>
<dbReference type="STRING" id="269799.Gmet_0634"/>
<dbReference type="KEGG" id="gme:Gmet_0634"/>
<dbReference type="eggNOG" id="COG0255">
    <property type="taxonomic scope" value="Bacteria"/>
</dbReference>
<dbReference type="HOGENOM" id="CLU_158491_5_2_7"/>
<dbReference type="Proteomes" id="UP000007073">
    <property type="component" value="Chromosome"/>
</dbReference>
<dbReference type="GO" id="GO:0022625">
    <property type="term" value="C:cytosolic large ribosomal subunit"/>
    <property type="evidence" value="ECO:0007669"/>
    <property type="project" value="TreeGrafter"/>
</dbReference>
<dbReference type="GO" id="GO:0003735">
    <property type="term" value="F:structural constituent of ribosome"/>
    <property type="evidence" value="ECO:0007669"/>
    <property type="project" value="InterPro"/>
</dbReference>
<dbReference type="GO" id="GO:0006412">
    <property type="term" value="P:translation"/>
    <property type="evidence" value="ECO:0007669"/>
    <property type="project" value="UniProtKB-UniRule"/>
</dbReference>
<dbReference type="CDD" id="cd00427">
    <property type="entry name" value="Ribosomal_L29_HIP"/>
    <property type="match status" value="1"/>
</dbReference>
<dbReference type="FunFam" id="1.10.287.310:FF:000001">
    <property type="entry name" value="50S ribosomal protein L29"/>
    <property type="match status" value="1"/>
</dbReference>
<dbReference type="Gene3D" id="1.10.287.310">
    <property type="match status" value="1"/>
</dbReference>
<dbReference type="HAMAP" id="MF_00374">
    <property type="entry name" value="Ribosomal_uL29"/>
    <property type="match status" value="1"/>
</dbReference>
<dbReference type="InterPro" id="IPR050063">
    <property type="entry name" value="Ribosomal_protein_uL29"/>
</dbReference>
<dbReference type="InterPro" id="IPR001854">
    <property type="entry name" value="Ribosomal_uL29"/>
</dbReference>
<dbReference type="InterPro" id="IPR018254">
    <property type="entry name" value="Ribosomal_uL29_CS"/>
</dbReference>
<dbReference type="InterPro" id="IPR036049">
    <property type="entry name" value="Ribosomal_uL29_sf"/>
</dbReference>
<dbReference type="NCBIfam" id="TIGR00012">
    <property type="entry name" value="L29"/>
    <property type="match status" value="1"/>
</dbReference>
<dbReference type="PANTHER" id="PTHR10916">
    <property type="entry name" value="60S RIBOSOMAL PROTEIN L35/50S RIBOSOMAL PROTEIN L29"/>
    <property type="match status" value="1"/>
</dbReference>
<dbReference type="PANTHER" id="PTHR10916:SF0">
    <property type="entry name" value="LARGE RIBOSOMAL SUBUNIT PROTEIN UL29C"/>
    <property type="match status" value="1"/>
</dbReference>
<dbReference type="Pfam" id="PF00831">
    <property type="entry name" value="Ribosomal_L29"/>
    <property type="match status" value="1"/>
</dbReference>
<dbReference type="SUPFAM" id="SSF46561">
    <property type="entry name" value="Ribosomal protein L29 (L29p)"/>
    <property type="match status" value="1"/>
</dbReference>
<dbReference type="PROSITE" id="PS00579">
    <property type="entry name" value="RIBOSOMAL_L29"/>
    <property type="match status" value="1"/>
</dbReference>
<name>RL29_GEOMG</name>
<protein>
    <recommendedName>
        <fullName evidence="1">Large ribosomal subunit protein uL29</fullName>
    </recommendedName>
    <alternativeName>
        <fullName evidence="2">50S ribosomal protein L29</fullName>
    </alternativeName>
</protein>
<keyword id="KW-1185">Reference proteome</keyword>
<keyword id="KW-0687">Ribonucleoprotein</keyword>
<keyword id="KW-0689">Ribosomal protein</keyword>
<gene>
    <name evidence="1" type="primary">rpmC</name>
    <name type="ordered locus">Gmet_0634</name>
</gene>
<comment type="similarity">
    <text evidence="1">Belongs to the universal ribosomal protein uL29 family.</text>
</comment>
<evidence type="ECO:0000255" key="1">
    <source>
        <dbReference type="HAMAP-Rule" id="MF_00374"/>
    </source>
</evidence>
<evidence type="ECO:0000305" key="2"/>
<sequence length="62" mass="7092">MKASDLKNMSVEELTAKNVELTKELFNLRFQLHTGRLENTAKISAVKKDIARVNTFLSERRG</sequence>
<accession>Q39XZ8</accession>
<feature type="chain" id="PRO_1000194019" description="Large ribosomal subunit protein uL29">
    <location>
        <begin position="1"/>
        <end position="62"/>
    </location>
</feature>
<proteinExistence type="inferred from homology"/>